<feature type="signal peptide" evidence="3">
    <location>
        <begin position="1"/>
        <end position="18"/>
    </location>
</feature>
<feature type="chain" id="PRO_0000330289" description="Hematopoietic cell signal transducer">
    <location>
        <begin position="19"/>
        <end position="79"/>
    </location>
</feature>
<feature type="topological domain" description="Extracellular" evidence="3">
    <location>
        <begin position="19"/>
        <end position="34"/>
    </location>
</feature>
<feature type="transmembrane region" description="Helical" evidence="3">
    <location>
        <begin position="35"/>
        <end position="55"/>
    </location>
</feature>
<feature type="topological domain" description="Cytoplasmic" evidence="3">
    <location>
        <begin position="56"/>
        <end position="79"/>
    </location>
</feature>
<feature type="region of interest" description="PIK3R1 binding site" evidence="1">
    <location>
        <begin position="72"/>
        <end position="75"/>
    </location>
</feature>
<feature type="region of interest" description="GRB2 binding site" evidence="1">
    <location>
        <begin position="72"/>
        <end position="74"/>
    </location>
</feature>
<feature type="modified residue" description="Phosphotyrosine" evidence="2">
    <location>
        <position position="72"/>
    </location>
</feature>
<comment type="function">
    <text evidence="1">Transmembrane adapter protein which associates with KLRK1 to form an activation receptor KLRK1-HCST in lymphoid and myeloid cells; this receptor plays a major role in triggering cytotoxicity against target cells expressing cell surface ligands such as MHC class I chain-related MICA and MICB, and UL16-binding proteins (ULBPs); these ligands are up-regulated by stress conditions and pathological state such as viral infection and tumor transformation. Functions as a docking site for PI3-kinase PIK3R1 and GRB2. Interaction of ULBPs with KLRK1-HCST triggers calcium mobilization and activation of the PIK3R1, MAP2K/ERK, and JAK2/STAT5 signaling pathways. Both PIK3R1 and GRB2 are required for full KLRK1-HCST-mediated activation and ultimate killing of target cells. In NK cells, KLRK1-HCST signaling directly induces cytotoxicity and enhances cytokine production initiated via DAP12/TYROBP-associated receptors. In T-cells, it provides primarily costimulation for TCR-induced signals. KLRK1-HCST receptor plays a role in immune surveillance against tumors and is required for cytolysis of tumors cells; indeed, melanoma cells that do not express KLRK1 ligands escape from immune surveillance mediated by NK cells (By similarity).</text>
</comment>
<comment type="subunit">
    <text evidence="1 2">Homodimer; Disulfide-linked. Heterohexamer composed of four subunits of HCST/DAP10 and two subunits of KLRK1. Interacts (via transmembrane domain) with KLRK1 (via transmembrane domain); the interaction is required for KLRK1 NK cell surface and induces NK cell-mediated cytotoxicity. Interacts with PIK3R1 and GRB2. Interacts with CLEC5A. Forms an CLEC5A/TYROBP/HCST trimolecular complex depending almost solely on TYROBP (By similarity). Interacts with CD300H (By similarity).</text>
</comment>
<comment type="subcellular location">
    <subcellularLocation>
        <location evidence="4">Membrane</location>
        <topology evidence="4">Single-pass type I membrane protein</topology>
    </subcellularLocation>
</comment>
<comment type="PTM">
    <text evidence="1">Phosphorylated; PIK3R1 and GRB2 associate specifically with tyrosine-phosphorylated HCST.</text>
</comment>
<comment type="PTM">
    <text evidence="1">O-glycosylated.</text>
</comment>
<comment type="similarity">
    <text evidence="4">Belongs to the DAP10 family.</text>
</comment>
<accession>Q8WNQ9</accession>
<keyword id="KW-1015">Disulfide bond</keyword>
<keyword id="KW-0325">Glycoprotein</keyword>
<keyword id="KW-0472">Membrane</keyword>
<keyword id="KW-0597">Phosphoprotein</keyword>
<keyword id="KW-1185">Reference proteome</keyword>
<keyword id="KW-0732">Signal</keyword>
<keyword id="KW-0812">Transmembrane</keyword>
<keyword id="KW-1133">Transmembrane helix</keyword>
<protein>
    <recommendedName>
        <fullName>Hematopoietic cell signal transducer</fullName>
    </recommendedName>
    <alternativeName>
        <fullName>DNAX-activation protein 10</fullName>
    </alternativeName>
    <alternativeName>
        <fullName>Membrane protein DAP10</fullName>
    </alternativeName>
</protein>
<reference key="1">
    <citation type="submission" date="2000-11" db="EMBL/GenBank/DDBJ databases">
        <title>Identification of Rhesus Monkey DAP10 and DAP12.</title>
        <authorList>
            <person name="LaBonte M.L."/>
            <person name="Letvin N.L."/>
        </authorList>
    </citation>
    <scope>NUCLEOTIDE SEQUENCE [MRNA]</scope>
</reference>
<name>HCST_MACMU</name>
<sequence length="79" mass="7934">MIHPGHILFLLLLPVAAAQTTPGSCSGCGSLSLPLLAGLVAADAVASPLIVGAVFLCARPRRSPAQGDGKVYINMPGRG</sequence>
<organism>
    <name type="scientific">Macaca mulatta</name>
    <name type="common">Rhesus macaque</name>
    <dbReference type="NCBI Taxonomy" id="9544"/>
    <lineage>
        <taxon>Eukaryota</taxon>
        <taxon>Metazoa</taxon>
        <taxon>Chordata</taxon>
        <taxon>Craniata</taxon>
        <taxon>Vertebrata</taxon>
        <taxon>Euteleostomi</taxon>
        <taxon>Mammalia</taxon>
        <taxon>Eutheria</taxon>
        <taxon>Euarchontoglires</taxon>
        <taxon>Primates</taxon>
        <taxon>Haplorrhini</taxon>
        <taxon>Catarrhini</taxon>
        <taxon>Cercopithecidae</taxon>
        <taxon>Cercopithecinae</taxon>
        <taxon>Macaca</taxon>
    </lineage>
</organism>
<evidence type="ECO:0000250" key="1"/>
<evidence type="ECO:0000250" key="2">
    <source>
        <dbReference type="UniProtKB" id="Q9UBK5"/>
    </source>
</evidence>
<evidence type="ECO:0000255" key="3"/>
<evidence type="ECO:0000305" key="4"/>
<gene>
    <name type="primary">HCST</name>
    <name type="synonym">DAP10</name>
</gene>
<dbReference type="EMBL" id="AF321610">
    <property type="protein sequence ID" value="AAL37223.1"/>
    <property type="molecule type" value="mRNA"/>
</dbReference>
<dbReference type="RefSeq" id="NP_001028007.1">
    <property type="nucleotide sequence ID" value="NM_001032835.2"/>
</dbReference>
<dbReference type="SMR" id="Q8WNQ9"/>
<dbReference type="FunCoup" id="Q8WNQ9">
    <property type="interactions" value="169"/>
</dbReference>
<dbReference type="STRING" id="9544.ENSMMUP00000025981"/>
<dbReference type="GeneID" id="574152"/>
<dbReference type="KEGG" id="mcc:574152"/>
<dbReference type="CTD" id="10870"/>
<dbReference type="InParanoid" id="Q8WNQ9"/>
<dbReference type="OrthoDB" id="8670797at2759"/>
<dbReference type="Proteomes" id="UP000006718">
    <property type="component" value="Unassembled WGS sequence"/>
</dbReference>
<dbReference type="GO" id="GO:0009986">
    <property type="term" value="C:cell surface"/>
    <property type="evidence" value="ECO:0000250"/>
    <property type="project" value="UniProtKB"/>
</dbReference>
<dbReference type="GO" id="GO:0016020">
    <property type="term" value="C:membrane"/>
    <property type="evidence" value="ECO:0007669"/>
    <property type="project" value="UniProtKB-SubCell"/>
</dbReference>
<dbReference type="GO" id="GO:0043548">
    <property type="term" value="F:phosphatidylinositol 3-kinase binding"/>
    <property type="evidence" value="ECO:0000318"/>
    <property type="project" value="GO_Central"/>
</dbReference>
<dbReference type="GO" id="GO:0005102">
    <property type="term" value="F:signaling receptor binding"/>
    <property type="evidence" value="ECO:0000318"/>
    <property type="project" value="GO_Central"/>
</dbReference>
<dbReference type="GO" id="GO:0051897">
    <property type="term" value="P:positive regulation of phosphatidylinositol 3-kinase/protein kinase B signal transduction"/>
    <property type="evidence" value="ECO:0000318"/>
    <property type="project" value="GO_Central"/>
</dbReference>
<dbReference type="GO" id="GO:0050776">
    <property type="term" value="P:regulation of immune response"/>
    <property type="evidence" value="ECO:0007669"/>
    <property type="project" value="InterPro"/>
</dbReference>
<dbReference type="InterPro" id="IPR009861">
    <property type="entry name" value="HCST"/>
</dbReference>
<dbReference type="PANTHER" id="PTHR21409">
    <property type="entry name" value="HEMATOPOIETIC CELL SIGNAL TRANSDUCER"/>
    <property type="match status" value="1"/>
</dbReference>
<dbReference type="PANTHER" id="PTHR21409:SF1">
    <property type="entry name" value="HEMATOPOIETIC CELL SIGNAL TRANSDUCER"/>
    <property type="match status" value="1"/>
</dbReference>
<dbReference type="Pfam" id="PF07213">
    <property type="entry name" value="DAP10"/>
    <property type="match status" value="1"/>
</dbReference>
<proteinExistence type="inferred from homology"/>